<proteinExistence type="inferred from homology"/>
<reference key="1">
    <citation type="journal article" date="2008" name="PLoS ONE">
        <title>Comparative analysis of Acinetobacters: three genomes for three lifestyles.</title>
        <authorList>
            <person name="Vallenet D."/>
            <person name="Nordmann P."/>
            <person name="Barbe V."/>
            <person name="Poirel L."/>
            <person name="Mangenot S."/>
            <person name="Bataille E."/>
            <person name="Dossat C."/>
            <person name="Gas S."/>
            <person name="Kreimeyer A."/>
            <person name="Lenoble P."/>
            <person name="Oztas S."/>
            <person name="Poulain J."/>
            <person name="Segurens B."/>
            <person name="Robert C."/>
            <person name="Abergel C."/>
            <person name="Claverie J.-M."/>
            <person name="Raoult D."/>
            <person name="Medigue C."/>
            <person name="Weissenbach J."/>
            <person name="Cruveiller S."/>
        </authorList>
    </citation>
    <scope>NUCLEOTIDE SEQUENCE [LARGE SCALE GENOMIC DNA]</scope>
    <source>
        <strain>SDF</strain>
    </source>
</reference>
<dbReference type="EMBL" id="CU468230">
    <property type="protein sequence ID" value="CAO99723.1"/>
    <property type="molecule type" value="Genomic_DNA"/>
</dbReference>
<dbReference type="SMR" id="B0VQ59"/>
<dbReference type="KEGG" id="abm:ABSDF0329"/>
<dbReference type="HOGENOM" id="CLU_103507_2_2_6"/>
<dbReference type="Proteomes" id="UP000001741">
    <property type="component" value="Chromosome"/>
</dbReference>
<dbReference type="GO" id="GO:0022625">
    <property type="term" value="C:cytosolic large ribosomal subunit"/>
    <property type="evidence" value="ECO:0007669"/>
    <property type="project" value="TreeGrafter"/>
</dbReference>
<dbReference type="GO" id="GO:0003735">
    <property type="term" value="F:structural constituent of ribosome"/>
    <property type="evidence" value="ECO:0007669"/>
    <property type="project" value="InterPro"/>
</dbReference>
<dbReference type="GO" id="GO:0006412">
    <property type="term" value="P:translation"/>
    <property type="evidence" value="ECO:0007669"/>
    <property type="project" value="UniProtKB-UniRule"/>
</dbReference>
<dbReference type="FunFam" id="2.30.30.790:FF:000001">
    <property type="entry name" value="50S ribosomal protein L19"/>
    <property type="match status" value="1"/>
</dbReference>
<dbReference type="Gene3D" id="2.30.30.790">
    <property type="match status" value="1"/>
</dbReference>
<dbReference type="HAMAP" id="MF_00402">
    <property type="entry name" value="Ribosomal_bL19"/>
    <property type="match status" value="1"/>
</dbReference>
<dbReference type="InterPro" id="IPR001857">
    <property type="entry name" value="Ribosomal_bL19"/>
</dbReference>
<dbReference type="InterPro" id="IPR018257">
    <property type="entry name" value="Ribosomal_bL19_CS"/>
</dbReference>
<dbReference type="InterPro" id="IPR038657">
    <property type="entry name" value="Ribosomal_bL19_sf"/>
</dbReference>
<dbReference type="InterPro" id="IPR008991">
    <property type="entry name" value="Translation_prot_SH3-like_sf"/>
</dbReference>
<dbReference type="NCBIfam" id="TIGR01024">
    <property type="entry name" value="rplS_bact"/>
    <property type="match status" value="1"/>
</dbReference>
<dbReference type="PANTHER" id="PTHR15680:SF9">
    <property type="entry name" value="LARGE RIBOSOMAL SUBUNIT PROTEIN BL19M"/>
    <property type="match status" value="1"/>
</dbReference>
<dbReference type="PANTHER" id="PTHR15680">
    <property type="entry name" value="RIBOSOMAL PROTEIN L19"/>
    <property type="match status" value="1"/>
</dbReference>
<dbReference type="Pfam" id="PF01245">
    <property type="entry name" value="Ribosomal_L19"/>
    <property type="match status" value="1"/>
</dbReference>
<dbReference type="PIRSF" id="PIRSF002191">
    <property type="entry name" value="Ribosomal_L19"/>
    <property type="match status" value="1"/>
</dbReference>
<dbReference type="PRINTS" id="PR00061">
    <property type="entry name" value="RIBOSOMALL19"/>
</dbReference>
<dbReference type="SUPFAM" id="SSF50104">
    <property type="entry name" value="Translation proteins SH3-like domain"/>
    <property type="match status" value="1"/>
</dbReference>
<dbReference type="PROSITE" id="PS01015">
    <property type="entry name" value="RIBOSOMAL_L19"/>
    <property type="match status" value="1"/>
</dbReference>
<name>RL19_ACIBS</name>
<evidence type="ECO:0000255" key="1">
    <source>
        <dbReference type="HAMAP-Rule" id="MF_00402"/>
    </source>
</evidence>
<evidence type="ECO:0000305" key="2"/>
<feature type="chain" id="PRO_1000193779" description="Large ribosomal subunit protein bL19">
    <location>
        <begin position="1"/>
        <end position="122"/>
    </location>
</feature>
<accession>B0VQ59</accession>
<organism>
    <name type="scientific">Acinetobacter baumannii (strain SDF)</name>
    <dbReference type="NCBI Taxonomy" id="509170"/>
    <lineage>
        <taxon>Bacteria</taxon>
        <taxon>Pseudomonadati</taxon>
        <taxon>Pseudomonadota</taxon>
        <taxon>Gammaproteobacteria</taxon>
        <taxon>Moraxellales</taxon>
        <taxon>Moraxellaceae</taxon>
        <taxon>Acinetobacter</taxon>
        <taxon>Acinetobacter calcoaceticus/baumannii complex</taxon>
    </lineage>
</organism>
<keyword id="KW-0687">Ribonucleoprotein</keyword>
<keyword id="KW-0689">Ribosomal protein</keyword>
<protein>
    <recommendedName>
        <fullName evidence="1">Large ribosomal subunit protein bL19</fullName>
    </recommendedName>
    <alternativeName>
        <fullName evidence="2">50S ribosomal protein L19</fullName>
    </alternativeName>
</protein>
<sequence length="122" mass="13592">MSGKHPLVQAIENSQLKTDLPEFAPGDTVVVQVKVKEGDRERLQAFEGVVIAKKNRGLNSAFTVRKISSGVGVERVFQTHSPVVAKIEVKRRGDVRRAKLYYLRDLSGKAARIREKLPARKA</sequence>
<gene>
    <name evidence="1" type="primary">rplS</name>
    <name type="ordered locus">ABSDF0329</name>
</gene>
<comment type="function">
    <text evidence="1">This protein is located at the 30S-50S ribosomal subunit interface and may play a role in the structure and function of the aminoacyl-tRNA binding site.</text>
</comment>
<comment type="similarity">
    <text evidence="1">Belongs to the bacterial ribosomal protein bL19 family.</text>
</comment>